<sequence length="113" mass="13003">MTLFFFSLGTRSFIDTESICNSRNVIENIYSNNNNNNNNNNNNNNNNNNNNNNNNNNNNNNNNNNNNNNINNNNNSNNNNNNNNNNNNNNNNNNNNNNSSSFEYSPTKFNLQY</sequence>
<name>Y5516_DICDI</name>
<keyword id="KW-1185">Reference proteome</keyword>
<protein>
    <recommendedName>
        <fullName>Putative uncharacterized protein DDB_G0283431</fullName>
    </recommendedName>
</protein>
<dbReference type="EMBL" id="AAFI02000055">
    <property type="protein sequence ID" value="EAL65700.1"/>
    <property type="molecule type" value="Genomic_DNA"/>
</dbReference>
<dbReference type="RefSeq" id="XP_639070.1">
    <property type="nucleotide sequence ID" value="XM_633978.1"/>
</dbReference>
<dbReference type="PaxDb" id="44689-DDB0185516"/>
<dbReference type="EnsemblProtists" id="EAL65700">
    <property type="protein sequence ID" value="EAL65700"/>
    <property type="gene ID" value="DDB_G0283431"/>
</dbReference>
<dbReference type="GeneID" id="8624095"/>
<dbReference type="KEGG" id="ddi:DDB_G0283431"/>
<dbReference type="dictyBase" id="DDB_G0283431"/>
<dbReference type="HOGENOM" id="CLU_2138203_0_0_1"/>
<dbReference type="InParanoid" id="Q54R21"/>
<dbReference type="OMA" id="CNSRNVI"/>
<dbReference type="PRO" id="PR:Q54R21"/>
<dbReference type="Proteomes" id="UP000002195">
    <property type="component" value="Chromosome 4"/>
</dbReference>
<reference key="1">
    <citation type="journal article" date="2005" name="Nature">
        <title>The genome of the social amoeba Dictyostelium discoideum.</title>
        <authorList>
            <person name="Eichinger L."/>
            <person name="Pachebat J.A."/>
            <person name="Gloeckner G."/>
            <person name="Rajandream M.A."/>
            <person name="Sucgang R."/>
            <person name="Berriman M."/>
            <person name="Song J."/>
            <person name="Olsen R."/>
            <person name="Szafranski K."/>
            <person name="Xu Q."/>
            <person name="Tunggal B."/>
            <person name="Kummerfeld S."/>
            <person name="Madera M."/>
            <person name="Konfortov B.A."/>
            <person name="Rivero F."/>
            <person name="Bankier A.T."/>
            <person name="Lehmann R."/>
            <person name="Hamlin N."/>
            <person name="Davies R."/>
            <person name="Gaudet P."/>
            <person name="Fey P."/>
            <person name="Pilcher K."/>
            <person name="Chen G."/>
            <person name="Saunders D."/>
            <person name="Sodergren E.J."/>
            <person name="Davis P."/>
            <person name="Kerhornou A."/>
            <person name="Nie X."/>
            <person name="Hall N."/>
            <person name="Anjard C."/>
            <person name="Hemphill L."/>
            <person name="Bason N."/>
            <person name="Farbrother P."/>
            <person name="Desany B."/>
            <person name="Just E."/>
            <person name="Morio T."/>
            <person name="Rost R."/>
            <person name="Churcher C.M."/>
            <person name="Cooper J."/>
            <person name="Haydock S."/>
            <person name="van Driessche N."/>
            <person name="Cronin A."/>
            <person name="Goodhead I."/>
            <person name="Muzny D.M."/>
            <person name="Mourier T."/>
            <person name="Pain A."/>
            <person name="Lu M."/>
            <person name="Harper D."/>
            <person name="Lindsay R."/>
            <person name="Hauser H."/>
            <person name="James K.D."/>
            <person name="Quiles M."/>
            <person name="Madan Babu M."/>
            <person name="Saito T."/>
            <person name="Buchrieser C."/>
            <person name="Wardroper A."/>
            <person name="Felder M."/>
            <person name="Thangavelu M."/>
            <person name="Johnson D."/>
            <person name="Knights A."/>
            <person name="Loulseged H."/>
            <person name="Mungall K.L."/>
            <person name="Oliver K."/>
            <person name="Price C."/>
            <person name="Quail M.A."/>
            <person name="Urushihara H."/>
            <person name="Hernandez J."/>
            <person name="Rabbinowitsch E."/>
            <person name="Steffen D."/>
            <person name="Sanders M."/>
            <person name="Ma J."/>
            <person name="Kohara Y."/>
            <person name="Sharp S."/>
            <person name="Simmonds M.N."/>
            <person name="Spiegler S."/>
            <person name="Tivey A."/>
            <person name="Sugano S."/>
            <person name="White B."/>
            <person name="Walker D."/>
            <person name="Woodward J.R."/>
            <person name="Winckler T."/>
            <person name="Tanaka Y."/>
            <person name="Shaulsky G."/>
            <person name="Schleicher M."/>
            <person name="Weinstock G.M."/>
            <person name="Rosenthal A."/>
            <person name="Cox E.C."/>
            <person name="Chisholm R.L."/>
            <person name="Gibbs R.A."/>
            <person name="Loomis W.F."/>
            <person name="Platzer M."/>
            <person name="Kay R.R."/>
            <person name="Williams J.G."/>
            <person name="Dear P.H."/>
            <person name="Noegel A.A."/>
            <person name="Barrell B.G."/>
            <person name="Kuspa A."/>
        </authorList>
    </citation>
    <scope>NUCLEOTIDE SEQUENCE [LARGE SCALE GENOMIC DNA]</scope>
    <source>
        <strain>AX4</strain>
    </source>
</reference>
<evidence type="ECO:0000256" key="1">
    <source>
        <dbReference type="SAM" id="MobiDB-lite"/>
    </source>
</evidence>
<proteinExistence type="predicted"/>
<organism>
    <name type="scientific">Dictyostelium discoideum</name>
    <name type="common">Social amoeba</name>
    <dbReference type="NCBI Taxonomy" id="44689"/>
    <lineage>
        <taxon>Eukaryota</taxon>
        <taxon>Amoebozoa</taxon>
        <taxon>Evosea</taxon>
        <taxon>Eumycetozoa</taxon>
        <taxon>Dictyostelia</taxon>
        <taxon>Dictyosteliales</taxon>
        <taxon>Dictyosteliaceae</taxon>
        <taxon>Dictyostelium</taxon>
    </lineage>
</organism>
<gene>
    <name type="ORF">DDB_G0283431</name>
</gene>
<accession>Q54R21</accession>
<feature type="chain" id="PRO_0000350877" description="Putative uncharacterized protein DDB_G0283431">
    <location>
        <begin position="1"/>
        <end position="113"/>
    </location>
</feature>
<feature type="region of interest" description="Disordered" evidence="1">
    <location>
        <begin position="31"/>
        <end position="113"/>
    </location>
</feature>
<feature type="compositionally biased region" description="Low complexity" evidence="1">
    <location>
        <begin position="32"/>
        <end position="98"/>
    </location>
</feature>
<feature type="compositionally biased region" description="Polar residues" evidence="1">
    <location>
        <begin position="99"/>
        <end position="113"/>
    </location>
</feature>